<comment type="function">
    <text evidence="1">Serine protease inhibitor that inhibits trypsin.</text>
</comment>
<comment type="subcellular location">
    <subcellularLocation>
        <location evidence="1">Secreted</location>
    </subcellularLocation>
</comment>
<comment type="tissue specificity">
    <text>Expressed by the venom gland.</text>
</comment>
<comment type="similarity">
    <text evidence="3">Belongs to the venom Kunitz-type family.</text>
</comment>
<evidence type="ECO:0000250" key="1"/>
<evidence type="ECO:0000255" key="2">
    <source>
        <dbReference type="PROSITE-ProRule" id="PRU00031"/>
    </source>
</evidence>
<evidence type="ECO:0000305" key="3"/>
<protein>
    <recommendedName>
        <fullName>Kunitz-type serine protease inhibitor 7</fullName>
    </recommendedName>
    <alternativeName>
        <fullName>BPTI-7</fullName>
    </alternativeName>
    <alternativeName>
        <fullName>Trypsin inhibitor 7</fullName>
    </alternativeName>
    <alternativeName>
        <fullName>Trypsin inhibitor B7</fullName>
    </alternativeName>
    <alternativeName>
        <fullName>Trypsin inhibitor C7</fullName>
    </alternativeName>
</protein>
<feature type="signal peptide" evidence="1">
    <location>
        <begin position="1"/>
        <end position="24"/>
    </location>
</feature>
<feature type="chain" id="PRO_5000284433" description="Kunitz-type serine protease inhibitor 7">
    <location>
        <begin position="25"/>
        <end position="84"/>
    </location>
</feature>
<feature type="domain" description="BPTI/Kunitz inhibitor" evidence="2">
    <location>
        <begin position="31"/>
        <end position="81"/>
    </location>
</feature>
<feature type="site" description="Reactive bond for trypsin" evidence="1">
    <location>
        <begin position="41"/>
        <end position="42"/>
    </location>
</feature>
<feature type="disulfide bond" evidence="2">
    <location>
        <begin position="31"/>
        <end position="81"/>
    </location>
</feature>
<feature type="disulfide bond" evidence="2">
    <location>
        <begin position="40"/>
        <end position="64"/>
    </location>
</feature>
<feature type="disulfide bond" evidence="2">
    <location>
        <begin position="56"/>
        <end position="77"/>
    </location>
</feature>
<name>VKTB7_DABSI</name>
<organism>
    <name type="scientific">Daboia siamensis</name>
    <name type="common">Eastern Russel's viper</name>
    <name type="synonym">Daboia russelii siamensis</name>
    <dbReference type="NCBI Taxonomy" id="343250"/>
    <lineage>
        <taxon>Eukaryota</taxon>
        <taxon>Metazoa</taxon>
        <taxon>Chordata</taxon>
        <taxon>Craniata</taxon>
        <taxon>Vertebrata</taxon>
        <taxon>Euteleostomi</taxon>
        <taxon>Lepidosauria</taxon>
        <taxon>Squamata</taxon>
        <taxon>Bifurcata</taxon>
        <taxon>Unidentata</taxon>
        <taxon>Episquamata</taxon>
        <taxon>Toxicofera</taxon>
        <taxon>Serpentes</taxon>
        <taxon>Colubroidea</taxon>
        <taxon>Viperidae</taxon>
        <taxon>Viperinae</taxon>
        <taxon>Daboia</taxon>
    </lineage>
</organism>
<dbReference type="EMBL" id="AM411367">
    <property type="protein sequence ID" value="CAL69608.1"/>
    <property type="molecule type" value="mRNA"/>
</dbReference>
<dbReference type="EMBL" id="AM411374">
    <property type="protein sequence ID" value="CAL69615.1"/>
    <property type="molecule type" value="mRNA"/>
</dbReference>
<dbReference type="SMR" id="A8Y7P0"/>
<dbReference type="MEROPS" id="I02.062"/>
<dbReference type="GO" id="GO:0005615">
    <property type="term" value="C:extracellular space"/>
    <property type="evidence" value="ECO:0007669"/>
    <property type="project" value="TreeGrafter"/>
</dbReference>
<dbReference type="GO" id="GO:0004867">
    <property type="term" value="F:serine-type endopeptidase inhibitor activity"/>
    <property type="evidence" value="ECO:0007669"/>
    <property type="project" value="UniProtKB-KW"/>
</dbReference>
<dbReference type="FunFam" id="4.10.410.10:FF:000021">
    <property type="entry name" value="Serine protease inhibitor, putative"/>
    <property type="match status" value="1"/>
</dbReference>
<dbReference type="Gene3D" id="4.10.410.10">
    <property type="entry name" value="Pancreatic trypsin inhibitor Kunitz domain"/>
    <property type="match status" value="1"/>
</dbReference>
<dbReference type="InterPro" id="IPR002223">
    <property type="entry name" value="Kunitz_BPTI"/>
</dbReference>
<dbReference type="InterPro" id="IPR036880">
    <property type="entry name" value="Kunitz_BPTI_sf"/>
</dbReference>
<dbReference type="InterPro" id="IPR020901">
    <property type="entry name" value="Prtase_inh_Kunz-CS"/>
</dbReference>
<dbReference type="InterPro" id="IPR050098">
    <property type="entry name" value="TFPI/VKTCI-like"/>
</dbReference>
<dbReference type="PANTHER" id="PTHR10083:SF374">
    <property type="entry name" value="BPTI_KUNITZ INHIBITOR DOMAIN-CONTAINING PROTEIN"/>
    <property type="match status" value="1"/>
</dbReference>
<dbReference type="PANTHER" id="PTHR10083">
    <property type="entry name" value="KUNITZ-TYPE PROTEASE INHIBITOR-RELATED"/>
    <property type="match status" value="1"/>
</dbReference>
<dbReference type="Pfam" id="PF00014">
    <property type="entry name" value="Kunitz_BPTI"/>
    <property type="match status" value="1"/>
</dbReference>
<dbReference type="PRINTS" id="PR00759">
    <property type="entry name" value="BASICPTASE"/>
</dbReference>
<dbReference type="SMART" id="SM00131">
    <property type="entry name" value="KU"/>
    <property type="match status" value="1"/>
</dbReference>
<dbReference type="SUPFAM" id="SSF57362">
    <property type="entry name" value="BPTI-like"/>
    <property type="match status" value="1"/>
</dbReference>
<dbReference type="PROSITE" id="PS00280">
    <property type="entry name" value="BPTI_KUNITZ_1"/>
    <property type="match status" value="1"/>
</dbReference>
<dbReference type="PROSITE" id="PS50279">
    <property type="entry name" value="BPTI_KUNITZ_2"/>
    <property type="match status" value="1"/>
</dbReference>
<sequence>MSSGGLLLLLGLLTLWAELTPISGHDRPTFCNLAPESGRCRGHLRRIYYNLESNKCKVFFYGGCGGNANNFETRDECRQTCGGK</sequence>
<accession>A8Y7P0</accession>
<proteinExistence type="evidence at transcript level"/>
<reference key="1">
    <citation type="submission" date="2006-11" db="EMBL/GenBank/DDBJ databases">
        <title>BPTI petides from Chinese Daboia russellii siamensis.</title>
        <authorList>
            <person name="Guo C."/>
            <person name="McClean S."/>
            <person name="Shaw C."/>
            <person name="Rao P."/>
            <person name="Ye M."/>
            <person name="Anthony John B."/>
        </authorList>
    </citation>
    <scope>NUCLEOTIDE SEQUENCE [MRNA]</scope>
    <source>
        <strain>Burma</strain>
        <strain>China</strain>
        <tissue>Venom gland</tissue>
    </source>
</reference>
<keyword id="KW-1015">Disulfide bond</keyword>
<keyword id="KW-0646">Protease inhibitor</keyword>
<keyword id="KW-0964">Secreted</keyword>
<keyword id="KW-0722">Serine protease inhibitor</keyword>
<keyword id="KW-0732">Signal</keyword>